<name>GCST_GEOTN</name>
<gene>
    <name evidence="1" type="primary">gcvT</name>
    <name type="ordered locus">GTNG_2364</name>
</gene>
<sequence>MLKRTPLFPVYARYGAKTVEFGGWEMPVQFSSIKEEHNAVRTRAGLFDVSHMGEIIVRGGGSLPFLQKLMTNDVAKLRPGRVQYTLMCDESAGTVDDLLIYQKGEDDYLLVVNAANTEKDFAWLSEHADGDVELEDVSAETALLALQGPAAERVLQKLTDMDLSALRPFSFQDGVEVASVKTLVSRTGYTGEDGFELYCQAEDAITLWEAILTAGAEDGVLPCGLGARDTLRFEACLPLYGQELSATISPLEAGLGFAVKTEKEPPFIGQAVLKQQKEAGPPRRLVGIEMIDKGIPRHGYRVFAAGEEAGFVTTGTQSPTLKKNIGLALVKAEVAAIGQEVEVDIRGKRLKATIVPTPFYKRAKS</sequence>
<evidence type="ECO:0000255" key="1">
    <source>
        <dbReference type="HAMAP-Rule" id="MF_00259"/>
    </source>
</evidence>
<accession>A4IQV5</accession>
<protein>
    <recommendedName>
        <fullName evidence="1">Aminomethyltransferase</fullName>
        <ecNumber evidence="1">2.1.2.10</ecNumber>
    </recommendedName>
    <alternativeName>
        <fullName evidence="1">Glycine cleavage system T protein</fullName>
    </alternativeName>
</protein>
<reference key="1">
    <citation type="journal article" date="2007" name="Proc. Natl. Acad. Sci. U.S.A.">
        <title>Genome and proteome of long-chain alkane degrading Geobacillus thermodenitrificans NG80-2 isolated from a deep-subsurface oil reservoir.</title>
        <authorList>
            <person name="Feng L."/>
            <person name="Wang W."/>
            <person name="Cheng J."/>
            <person name="Ren Y."/>
            <person name="Zhao G."/>
            <person name="Gao C."/>
            <person name="Tang Y."/>
            <person name="Liu X."/>
            <person name="Han W."/>
            <person name="Peng X."/>
            <person name="Liu R."/>
            <person name="Wang L."/>
        </authorList>
    </citation>
    <scope>NUCLEOTIDE SEQUENCE [LARGE SCALE GENOMIC DNA]</scope>
    <source>
        <strain>NG80-2</strain>
    </source>
</reference>
<organism>
    <name type="scientific">Geobacillus thermodenitrificans (strain NG80-2)</name>
    <dbReference type="NCBI Taxonomy" id="420246"/>
    <lineage>
        <taxon>Bacteria</taxon>
        <taxon>Bacillati</taxon>
        <taxon>Bacillota</taxon>
        <taxon>Bacilli</taxon>
        <taxon>Bacillales</taxon>
        <taxon>Anoxybacillaceae</taxon>
        <taxon>Geobacillus</taxon>
    </lineage>
</organism>
<feature type="chain" id="PRO_1000047672" description="Aminomethyltransferase">
    <location>
        <begin position="1"/>
        <end position="365"/>
    </location>
</feature>
<keyword id="KW-0032">Aminotransferase</keyword>
<keyword id="KW-0808">Transferase</keyword>
<dbReference type="EC" id="2.1.2.10" evidence="1"/>
<dbReference type="EMBL" id="CP000557">
    <property type="protein sequence ID" value="ABO67709.1"/>
    <property type="molecule type" value="Genomic_DNA"/>
</dbReference>
<dbReference type="RefSeq" id="WP_008879842.1">
    <property type="nucleotide sequence ID" value="NC_009328.1"/>
</dbReference>
<dbReference type="SMR" id="A4IQV5"/>
<dbReference type="GeneID" id="87623542"/>
<dbReference type="KEGG" id="gtn:GTNG_2364"/>
<dbReference type="eggNOG" id="COG0404">
    <property type="taxonomic scope" value="Bacteria"/>
</dbReference>
<dbReference type="HOGENOM" id="CLU_007884_10_2_9"/>
<dbReference type="Proteomes" id="UP000001578">
    <property type="component" value="Chromosome"/>
</dbReference>
<dbReference type="GO" id="GO:0005829">
    <property type="term" value="C:cytosol"/>
    <property type="evidence" value="ECO:0007669"/>
    <property type="project" value="TreeGrafter"/>
</dbReference>
<dbReference type="GO" id="GO:0005960">
    <property type="term" value="C:glycine cleavage complex"/>
    <property type="evidence" value="ECO:0007669"/>
    <property type="project" value="InterPro"/>
</dbReference>
<dbReference type="GO" id="GO:0004047">
    <property type="term" value="F:aminomethyltransferase activity"/>
    <property type="evidence" value="ECO:0007669"/>
    <property type="project" value="UniProtKB-UniRule"/>
</dbReference>
<dbReference type="GO" id="GO:0008483">
    <property type="term" value="F:transaminase activity"/>
    <property type="evidence" value="ECO:0007669"/>
    <property type="project" value="UniProtKB-KW"/>
</dbReference>
<dbReference type="GO" id="GO:0019464">
    <property type="term" value="P:glycine decarboxylation via glycine cleavage system"/>
    <property type="evidence" value="ECO:0007669"/>
    <property type="project" value="UniProtKB-UniRule"/>
</dbReference>
<dbReference type="FunFam" id="2.40.30.110:FF:000003">
    <property type="entry name" value="Aminomethyltransferase"/>
    <property type="match status" value="1"/>
</dbReference>
<dbReference type="FunFam" id="3.30.70.1400:FF:000001">
    <property type="entry name" value="Aminomethyltransferase"/>
    <property type="match status" value="1"/>
</dbReference>
<dbReference type="FunFam" id="4.10.1250.10:FF:000001">
    <property type="entry name" value="Aminomethyltransferase"/>
    <property type="match status" value="1"/>
</dbReference>
<dbReference type="Gene3D" id="2.40.30.110">
    <property type="entry name" value="Aminomethyltransferase beta-barrel domains"/>
    <property type="match status" value="1"/>
</dbReference>
<dbReference type="Gene3D" id="3.30.70.1400">
    <property type="entry name" value="Aminomethyltransferase beta-barrel domains"/>
    <property type="match status" value="1"/>
</dbReference>
<dbReference type="Gene3D" id="4.10.1250.10">
    <property type="entry name" value="Aminomethyltransferase fragment"/>
    <property type="match status" value="1"/>
</dbReference>
<dbReference type="Gene3D" id="3.30.1360.120">
    <property type="entry name" value="Probable tRNA modification gtpase trme, domain 1"/>
    <property type="match status" value="1"/>
</dbReference>
<dbReference type="HAMAP" id="MF_00259">
    <property type="entry name" value="GcvT"/>
    <property type="match status" value="1"/>
</dbReference>
<dbReference type="InterPro" id="IPR006223">
    <property type="entry name" value="GCS_T"/>
</dbReference>
<dbReference type="InterPro" id="IPR022903">
    <property type="entry name" value="GCS_T_bac"/>
</dbReference>
<dbReference type="InterPro" id="IPR013977">
    <property type="entry name" value="GCST_C"/>
</dbReference>
<dbReference type="InterPro" id="IPR006222">
    <property type="entry name" value="GCV_T_N"/>
</dbReference>
<dbReference type="InterPro" id="IPR028896">
    <property type="entry name" value="GcvT/YgfZ/DmdA"/>
</dbReference>
<dbReference type="InterPro" id="IPR029043">
    <property type="entry name" value="GcvT/YgfZ_C"/>
</dbReference>
<dbReference type="InterPro" id="IPR027266">
    <property type="entry name" value="TrmE/GcvT_dom1"/>
</dbReference>
<dbReference type="NCBIfam" id="TIGR00528">
    <property type="entry name" value="gcvT"/>
    <property type="match status" value="1"/>
</dbReference>
<dbReference type="NCBIfam" id="NF001567">
    <property type="entry name" value="PRK00389.1"/>
    <property type="match status" value="1"/>
</dbReference>
<dbReference type="PANTHER" id="PTHR43757">
    <property type="entry name" value="AMINOMETHYLTRANSFERASE"/>
    <property type="match status" value="1"/>
</dbReference>
<dbReference type="PANTHER" id="PTHR43757:SF2">
    <property type="entry name" value="AMINOMETHYLTRANSFERASE, MITOCHONDRIAL"/>
    <property type="match status" value="1"/>
</dbReference>
<dbReference type="Pfam" id="PF01571">
    <property type="entry name" value="GCV_T"/>
    <property type="match status" value="1"/>
</dbReference>
<dbReference type="Pfam" id="PF08669">
    <property type="entry name" value="GCV_T_C"/>
    <property type="match status" value="1"/>
</dbReference>
<dbReference type="PIRSF" id="PIRSF006487">
    <property type="entry name" value="GcvT"/>
    <property type="match status" value="1"/>
</dbReference>
<dbReference type="SUPFAM" id="SSF101790">
    <property type="entry name" value="Aminomethyltransferase beta-barrel domain"/>
    <property type="match status" value="1"/>
</dbReference>
<dbReference type="SUPFAM" id="SSF103025">
    <property type="entry name" value="Folate-binding domain"/>
    <property type="match status" value="1"/>
</dbReference>
<proteinExistence type="inferred from homology"/>
<comment type="function">
    <text evidence="1">The glycine cleavage system catalyzes the degradation of glycine.</text>
</comment>
<comment type="catalytic activity">
    <reaction evidence="1">
        <text>N(6)-[(R)-S(8)-aminomethyldihydrolipoyl]-L-lysyl-[protein] + (6S)-5,6,7,8-tetrahydrofolate = N(6)-[(R)-dihydrolipoyl]-L-lysyl-[protein] + (6R)-5,10-methylene-5,6,7,8-tetrahydrofolate + NH4(+)</text>
        <dbReference type="Rhea" id="RHEA:16945"/>
        <dbReference type="Rhea" id="RHEA-COMP:10475"/>
        <dbReference type="Rhea" id="RHEA-COMP:10492"/>
        <dbReference type="ChEBI" id="CHEBI:15636"/>
        <dbReference type="ChEBI" id="CHEBI:28938"/>
        <dbReference type="ChEBI" id="CHEBI:57453"/>
        <dbReference type="ChEBI" id="CHEBI:83100"/>
        <dbReference type="ChEBI" id="CHEBI:83143"/>
        <dbReference type="EC" id="2.1.2.10"/>
    </reaction>
</comment>
<comment type="subunit">
    <text evidence="1">The glycine cleavage system is composed of four proteins: P, T, L and H.</text>
</comment>
<comment type="similarity">
    <text evidence="1">Belongs to the GcvT family.</text>
</comment>